<dbReference type="EC" id="2.3.2.27"/>
<dbReference type="EMBL" id="AC005278">
    <property type="protein sequence ID" value="AAC72106.1"/>
    <property type="molecule type" value="Genomic_DNA"/>
</dbReference>
<dbReference type="EMBL" id="CP002684">
    <property type="protein sequence ID" value="AEE27564.1"/>
    <property type="molecule type" value="Genomic_DNA"/>
</dbReference>
<dbReference type="EMBL" id="CP002684">
    <property type="protein sequence ID" value="ANM58631.1"/>
    <property type="molecule type" value="Genomic_DNA"/>
</dbReference>
<dbReference type="PIR" id="D86165">
    <property type="entry name" value="D86165"/>
</dbReference>
<dbReference type="RefSeq" id="NP_001184899.1">
    <property type="nucleotide sequence ID" value="NM_001197970.2"/>
</dbReference>
<dbReference type="RefSeq" id="NP_001321053.1">
    <property type="nucleotide sequence ID" value="NM_001331406.1"/>
</dbReference>
<dbReference type="SMR" id="Q9ZVT8"/>
<dbReference type="FunCoup" id="Q9ZVT8">
    <property type="interactions" value="983"/>
</dbReference>
<dbReference type="STRING" id="3702.Q9ZVT8"/>
<dbReference type="iPTMnet" id="Q9ZVT8"/>
<dbReference type="PaxDb" id="3702-AT1G03365.1"/>
<dbReference type="ProteomicsDB" id="236992"/>
<dbReference type="EnsemblPlants" id="AT1G03365.1">
    <property type="protein sequence ID" value="AT1G03365.1"/>
    <property type="gene ID" value="AT1G03365"/>
</dbReference>
<dbReference type="EnsemblPlants" id="AT1G03365.2">
    <property type="protein sequence ID" value="AT1G03365.2"/>
    <property type="gene ID" value="AT1G03365"/>
</dbReference>
<dbReference type="GeneID" id="10723112"/>
<dbReference type="Gramene" id="AT1G03365.1">
    <property type="protein sequence ID" value="AT1G03365.1"/>
    <property type="gene ID" value="AT1G03365"/>
</dbReference>
<dbReference type="Gramene" id="AT1G03365.2">
    <property type="protein sequence ID" value="AT1G03365.2"/>
    <property type="gene ID" value="AT1G03365"/>
</dbReference>
<dbReference type="KEGG" id="ath:AT1G03365"/>
<dbReference type="Araport" id="AT1G03365"/>
<dbReference type="TAIR" id="AT1G03365"/>
<dbReference type="eggNOG" id="ENOG502SB0J">
    <property type="taxonomic scope" value="Eukaryota"/>
</dbReference>
<dbReference type="HOGENOM" id="CLU_012143_0_1_1"/>
<dbReference type="InParanoid" id="Q9ZVT8"/>
<dbReference type="OMA" id="KPHAIAR"/>
<dbReference type="UniPathway" id="UPA00143"/>
<dbReference type="PRO" id="PR:Q9ZVT8"/>
<dbReference type="Proteomes" id="UP000006548">
    <property type="component" value="Chromosome 1"/>
</dbReference>
<dbReference type="ExpressionAtlas" id="Q9ZVT8">
    <property type="expression patterns" value="baseline and differential"/>
</dbReference>
<dbReference type="GO" id="GO:0016740">
    <property type="term" value="F:transferase activity"/>
    <property type="evidence" value="ECO:0007669"/>
    <property type="project" value="UniProtKB-KW"/>
</dbReference>
<dbReference type="GO" id="GO:0008270">
    <property type="term" value="F:zinc ion binding"/>
    <property type="evidence" value="ECO:0007669"/>
    <property type="project" value="UniProtKB-KW"/>
</dbReference>
<dbReference type="GO" id="GO:0016567">
    <property type="term" value="P:protein ubiquitination"/>
    <property type="evidence" value="ECO:0007669"/>
    <property type="project" value="UniProtKB-UniPathway"/>
</dbReference>
<dbReference type="CDD" id="cd23128">
    <property type="entry name" value="RING-HC_MIP1-like"/>
    <property type="match status" value="1"/>
</dbReference>
<dbReference type="Gene3D" id="3.30.40.10">
    <property type="entry name" value="Zinc/RING finger domain, C3HC4 (zinc finger)"/>
    <property type="match status" value="1"/>
</dbReference>
<dbReference type="InterPro" id="IPR046934">
    <property type="entry name" value="PIR2-like"/>
</dbReference>
<dbReference type="InterPro" id="IPR046527">
    <property type="entry name" value="PIR2-like_helical"/>
</dbReference>
<dbReference type="InterPro" id="IPR001841">
    <property type="entry name" value="Znf_RING"/>
</dbReference>
<dbReference type="InterPro" id="IPR013083">
    <property type="entry name" value="Znf_RING/FYVE/PHD"/>
</dbReference>
<dbReference type="PANTHER" id="PTHR46405:SF4">
    <property type="entry name" value="E3 UBIQUITIN-PROTEIN LIGASE RF298-RELATED"/>
    <property type="match status" value="1"/>
</dbReference>
<dbReference type="PANTHER" id="PTHR46405">
    <property type="entry name" value="OS05G0141500 PROTEIN"/>
    <property type="match status" value="1"/>
</dbReference>
<dbReference type="Pfam" id="PF20235">
    <property type="entry name" value="PIR2-like_helical"/>
    <property type="match status" value="1"/>
</dbReference>
<dbReference type="Pfam" id="PF13920">
    <property type="entry name" value="zf-C3HC4_3"/>
    <property type="match status" value="1"/>
</dbReference>
<dbReference type="SUPFAM" id="SSF57850">
    <property type="entry name" value="RING/U-box"/>
    <property type="match status" value="1"/>
</dbReference>
<dbReference type="PROSITE" id="PS50089">
    <property type="entry name" value="ZF_RING_2"/>
    <property type="match status" value="1"/>
</dbReference>
<feature type="chain" id="PRO_0000395977" description="Putative E3 ubiquitin-protein ligase RF4">
    <location>
        <begin position="1"/>
        <end position="823"/>
    </location>
</feature>
<feature type="zinc finger region" description="RING-type" evidence="3">
    <location>
        <begin position="768"/>
        <end position="808"/>
    </location>
</feature>
<feature type="region of interest" description="Disordered" evidence="4">
    <location>
        <begin position="24"/>
        <end position="72"/>
    </location>
</feature>
<feature type="region of interest" description="Disordered" evidence="4">
    <location>
        <begin position="224"/>
        <end position="291"/>
    </location>
</feature>
<feature type="region of interest" description="Disordered" evidence="4">
    <location>
        <begin position="432"/>
        <end position="464"/>
    </location>
</feature>
<feature type="coiled-coil region" evidence="2">
    <location>
        <begin position="536"/>
        <end position="738"/>
    </location>
</feature>
<feature type="compositionally biased region" description="Polar residues" evidence="4">
    <location>
        <begin position="61"/>
        <end position="72"/>
    </location>
</feature>
<feature type="compositionally biased region" description="Low complexity" evidence="4">
    <location>
        <begin position="224"/>
        <end position="240"/>
    </location>
</feature>
<feature type="compositionally biased region" description="Polar residues" evidence="4">
    <location>
        <begin position="267"/>
        <end position="282"/>
    </location>
</feature>
<feature type="compositionally biased region" description="Basic and acidic residues" evidence="4">
    <location>
        <begin position="453"/>
        <end position="464"/>
    </location>
</feature>
<keyword id="KW-0175">Coiled coil</keyword>
<keyword id="KW-0479">Metal-binding</keyword>
<keyword id="KW-1185">Reference proteome</keyword>
<keyword id="KW-0808">Transferase</keyword>
<keyword id="KW-0833">Ubl conjugation pathway</keyword>
<keyword id="KW-0862">Zinc</keyword>
<keyword id="KW-0863">Zinc-finger</keyword>
<protein>
    <recommendedName>
        <fullName>Putative E3 ubiquitin-protein ligase RF4</fullName>
        <ecNumber>2.3.2.27</ecNumber>
    </recommendedName>
    <alternativeName>
        <fullName>RING finger protein 4</fullName>
    </alternativeName>
    <alternativeName>
        <fullName evidence="5">RING-type E3 ubiquitin transferase RF4</fullName>
    </alternativeName>
</protein>
<proteinExistence type="inferred from homology"/>
<reference key="1">
    <citation type="journal article" date="2000" name="Nature">
        <title>Sequence and analysis of chromosome 1 of the plant Arabidopsis thaliana.</title>
        <authorList>
            <person name="Theologis A."/>
            <person name="Ecker J.R."/>
            <person name="Palm C.J."/>
            <person name="Federspiel N.A."/>
            <person name="Kaul S."/>
            <person name="White O."/>
            <person name="Alonso J."/>
            <person name="Altafi H."/>
            <person name="Araujo R."/>
            <person name="Bowman C.L."/>
            <person name="Brooks S.Y."/>
            <person name="Buehler E."/>
            <person name="Chan A."/>
            <person name="Chao Q."/>
            <person name="Chen H."/>
            <person name="Cheuk R.F."/>
            <person name="Chin C.W."/>
            <person name="Chung M.K."/>
            <person name="Conn L."/>
            <person name="Conway A.B."/>
            <person name="Conway A.R."/>
            <person name="Creasy T.H."/>
            <person name="Dewar K."/>
            <person name="Dunn P."/>
            <person name="Etgu P."/>
            <person name="Feldblyum T.V."/>
            <person name="Feng J.-D."/>
            <person name="Fong B."/>
            <person name="Fujii C.Y."/>
            <person name="Gill J.E."/>
            <person name="Goldsmith A.D."/>
            <person name="Haas B."/>
            <person name="Hansen N.F."/>
            <person name="Hughes B."/>
            <person name="Huizar L."/>
            <person name="Hunter J.L."/>
            <person name="Jenkins J."/>
            <person name="Johnson-Hopson C."/>
            <person name="Khan S."/>
            <person name="Khaykin E."/>
            <person name="Kim C.J."/>
            <person name="Koo H.L."/>
            <person name="Kremenetskaia I."/>
            <person name="Kurtz D.B."/>
            <person name="Kwan A."/>
            <person name="Lam B."/>
            <person name="Langin-Hooper S."/>
            <person name="Lee A."/>
            <person name="Lee J.M."/>
            <person name="Lenz C.A."/>
            <person name="Li J.H."/>
            <person name="Li Y.-P."/>
            <person name="Lin X."/>
            <person name="Liu S.X."/>
            <person name="Liu Z.A."/>
            <person name="Luros J.S."/>
            <person name="Maiti R."/>
            <person name="Marziali A."/>
            <person name="Militscher J."/>
            <person name="Miranda M."/>
            <person name="Nguyen M."/>
            <person name="Nierman W.C."/>
            <person name="Osborne B.I."/>
            <person name="Pai G."/>
            <person name="Peterson J."/>
            <person name="Pham P.K."/>
            <person name="Rizzo M."/>
            <person name="Rooney T."/>
            <person name="Rowley D."/>
            <person name="Sakano H."/>
            <person name="Salzberg S.L."/>
            <person name="Schwartz J.R."/>
            <person name="Shinn P."/>
            <person name="Southwick A.M."/>
            <person name="Sun H."/>
            <person name="Tallon L.J."/>
            <person name="Tambunga G."/>
            <person name="Toriumi M.J."/>
            <person name="Town C.D."/>
            <person name="Utterback T."/>
            <person name="Van Aken S."/>
            <person name="Vaysberg M."/>
            <person name="Vysotskaia V.S."/>
            <person name="Walker M."/>
            <person name="Wu D."/>
            <person name="Yu G."/>
            <person name="Fraser C.M."/>
            <person name="Venter J.C."/>
            <person name="Davis R.W."/>
        </authorList>
    </citation>
    <scope>NUCLEOTIDE SEQUENCE [LARGE SCALE GENOMIC DNA]</scope>
    <source>
        <strain>cv. Columbia</strain>
    </source>
</reference>
<reference key="2">
    <citation type="journal article" date="2017" name="Plant J.">
        <title>Araport11: a complete reannotation of the Arabidopsis thaliana reference genome.</title>
        <authorList>
            <person name="Cheng C.Y."/>
            <person name="Krishnakumar V."/>
            <person name="Chan A.P."/>
            <person name="Thibaud-Nissen F."/>
            <person name="Schobel S."/>
            <person name="Town C.D."/>
        </authorList>
    </citation>
    <scope>GENOME REANNOTATION</scope>
    <source>
        <strain>cv. Columbia</strain>
    </source>
</reference>
<reference key="3">
    <citation type="journal article" date="2002" name="Genome Biol.">
        <title>Evaluation and classification of RING-finger domains encoded by the Arabidopsis genome.</title>
        <authorList>
            <person name="Kosarev P."/>
            <person name="Mayer K.F.X."/>
            <person name="Hardtke C.S."/>
        </authorList>
    </citation>
    <scope>GENE FAMILY ORGANIZATION</scope>
</reference>
<evidence type="ECO:0000250" key="1"/>
<evidence type="ECO:0000255" key="2"/>
<evidence type="ECO:0000255" key="3">
    <source>
        <dbReference type="PROSITE-ProRule" id="PRU00175"/>
    </source>
</evidence>
<evidence type="ECO:0000256" key="4">
    <source>
        <dbReference type="SAM" id="MobiDB-lite"/>
    </source>
</evidence>
<evidence type="ECO:0000305" key="5"/>
<organism>
    <name type="scientific">Arabidopsis thaliana</name>
    <name type="common">Mouse-ear cress</name>
    <dbReference type="NCBI Taxonomy" id="3702"/>
    <lineage>
        <taxon>Eukaryota</taxon>
        <taxon>Viridiplantae</taxon>
        <taxon>Streptophyta</taxon>
        <taxon>Embryophyta</taxon>
        <taxon>Tracheophyta</taxon>
        <taxon>Spermatophyta</taxon>
        <taxon>Magnoliopsida</taxon>
        <taxon>eudicotyledons</taxon>
        <taxon>Gunneridae</taxon>
        <taxon>Pentapetalae</taxon>
        <taxon>rosids</taxon>
        <taxon>malvids</taxon>
        <taxon>Brassicales</taxon>
        <taxon>Brassicaceae</taxon>
        <taxon>Camelineae</taxon>
        <taxon>Arabidopsis</taxon>
    </lineage>
</organism>
<accession>Q9ZVT8</accession>
<name>RF4_ARATH</name>
<gene>
    <name type="primary">RF4</name>
    <name type="ordered locus">At1g03365</name>
    <name type="ORF">F15K9.3</name>
</gene>
<sequence>MSIVQKQEEMNGCGLNVDKVEAFTVSPQEKGRKNKRKLADPSQPNASSLTEFPPYELPSLKPQNHLSGNGSVGEVSNQLQVEVSESVEWDDPFACHLEELLSSNLLTLFLDTMKQLIDLGYTDDEVLKAVSRCRLYCGGNNLLSNIVNNTLSALKTGDEGAGSGDYVFEDLQQLVSYTLVEMISLIKEVRPSLSTVEAMWRLLMCDLNVLQAFEAEGDGLVSSSKLSDSESLGAESNPPKSSDPDNPKPPQSDPQSNRNEPLKFGNFPNTPNSKKTQSSGTTPGKEVCSGSTVSCQGMRSTSFTLVSDEKLVSCRKGRTKKEIAMLRQKSCVEKIRTYSKGSGYKAAKFASVGSFLLEKRVKSSSEFVPRNSSSKITAEIGVKVSLAEDSGCFVRKNSKLDSPVVVVDAKGYITALPARSVKSASKKKTGSESVTLIPSASEKKSDSSIPSTSEKKSGSESEEKASVSAKLAPDYYAGIPYDAALGIYVPRDKKDELILKLVPRVNDLQNELQVWTDWANQKVKEATGRLLKDQPELKALRKEREEAEQYKKEKQLLEENTRKRLSEMDFALKNATSQLEKAFNTAHRLELEQSILKKEMEAAKIKAVESAESFREAKERGERSLKDIHSWEGQKIMLQEELKGQREKVTVLQKEVTKAKNRQNQIEAALKQERTAKGKLSAQASLIRKETKELEALGKVEEERIKGKAETDVKYYIDNIKRLEREISELKLKSDYSRIIALKKGSSESKATKRESLGMPKVKRERECVMCLSEEMSVIFLPCAHQVLCFKCNQLHEKEGMMDCPSCRGTIHRRIQARFARSG</sequence>
<comment type="catalytic activity">
    <reaction>
        <text>S-ubiquitinyl-[E2 ubiquitin-conjugating enzyme]-L-cysteine + [acceptor protein]-L-lysine = [E2 ubiquitin-conjugating enzyme]-L-cysteine + N(6)-ubiquitinyl-[acceptor protein]-L-lysine.</text>
        <dbReference type="EC" id="2.3.2.27"/>
    </reaction>
</comment>
<comment type="pathway">
    <text>Protein modification; protein ubiquitination.</text>
</comment>
<comment type="domain">
    <text evidence="1">The RING-type zinc finger domain mediates binding to an E2 ubiquitin-conjugating enzyme.</text>
</comment>
<comment type="similarity">
    <text evidence="5">Belongs to the RING-type zinc finger family.</text>
</comment>